<dbReference type="EC" id="2.1.1.-"/>
<dbReference type="EMBL" id="LT708304">
    <property type="protein sequence ID" value="SIU01598.1"/>
    <property type="molecule type" value="Genomic_DNA"/>
</dbReference>
<dbReference type="RefSeq" id="NP_856621.1">
    <property type="nucleotide sequence ID" value="NC_002945.3"/>
</dbReference>
<dbReference type="RefSeq" id="WP_003414900.1">
    <property type="nucleotide sequence ID" value="NC_002945.4"/>
</dbReference>
<dbReference type="SMR" id="Q7TXK3"/>
<dbReference type="KEGG" id="mbo:BQ2027_MB2976"/>
<dbReference type="PATRIC" id="fig|233413.5.peg.3270"/>
<dbReference type="BioCyc" id="MetaCyc:MONOMER-19635"/>
<dbReference type="Proteomes" id="UP000001419">
    <property type="component" value="Chromosome"/>
</dbReference>
<dbReference type="GO" id="GO:0008757">
    <property type="term" value="F:S-adenosylmethionine-dependent methyltransferase activity"/>
    <property type="evidence" value="ECO:0007669"/>
    <property type="project" value="InterPro"/>
</dbReference>
<dbReference type="GO" id="GO:0006629">
    <property type="term" value="P:lipid metabolic process"/>
    <property type="evidence" value="ECO:0007669"/>
    <property type="project" value="UniProtKB-KW"/>
</dbReference>
<dbReference type="GO" id="GO:0032259">
    <property type="term" value="P:methylation"/>
    <property type="evidence" value="ECO:0007669"/>
    <property type="project" value="UniProtKB-KW"/>
</dbReference>
<dbReference type="CDD" id="cd02440">
    <property type="entry name" value="AdoMet_MTases"/>
    <property type="match status" value="1"/>
</dbReference>
<dbReference type="FunFam" id="3.40.50.150:FF:000444">
    <property type="entry name" value="Phthiotriol/phenolphthiotriol dimycocerosates methyltransferase"/>
    <property type="match status" value="1"/>
</dbReference>
<dbReference type="Gene3D" id="3.40.50.150">
    <property type="entry name" value="Vaccinia Virus protein VP39"/>
    <property type="match status" value="1"/>
</dbReference>
<dbReference type="InterPro" id="IPR013216">
    <property type="entry name" value="Methyltransf_11"/>
</dbReference>
<dbReference type="InterPro" id="IPR050508">
    <property type="entry name" value="Methyltransf_Superfamily"/>
</dbReference>
<dbReference type="InterPro" id="IPR054877">
    <property type="entry name" value="PthPhpthDimycoMt"/>
</dbReference>
<dbReference type="InterPro" id="IPR029063">
    <property type="entry name" value="SAM-dependent_MTases_sf"/>
</dbReference>
<dbReference type="NCBIfam" id="NF045823">
    <property type="entry name" value="PthPhpthDimycoMt"/>
    <property type="match status" value="1"/>
</dbReference>
<dbReference type="PANTHER" id="PTHR42912">
    <property type="entry name" value="METHYLTRANSFERASE"/>
    <property type="match status" value="1"/>
</dbReference>
<dbReference type="PANTHER" id="PTHR42912:SF93">
    <property type="entry name" value="N6-ADENOSINE-METHYLTRANSFERASE TMT1A"/>
    <property type="match status" value="1"/>
</dbReference>
<dbReference type="Pfam" id="PF08241">
    <property type="entry name" value="Methyltransf_11"/>
    <property type="match status" value="1"/>
</dbReference>
<dbReference type="SUPFAM" id="SSF53335">
    <property type="entry name" value="S-adenosyl-L-methionine-dependent methyltransferases"/>
    <property type="match status" value="1"/>
</dbReference>
<sequence length="270" mass="30652">MAFSRTHSLLARAGSTSTYKRVWRYWYPLMTRGLGNDEIVFINWAYEEDPPMDLPLEASDEPNRAHINLYHRTATQVDLGGKQVLEVSCGHGGGASYLTRTLHPASYTGLDLNQAGIKLCKKRHRLPGLDFVRGDAENLPFDDESFDVVLNVEASHCYPHFRRFLAEVVRVLRPGGYFPYADLRPNNEIAAWEADLAATPLRQLSQRQINAEVLRGIGNNSQKSRDLVDRHLPAFLRFAGREFIGVQGTQLSRYLEGGELSYRMYCFTKD</sequence>
<reference key="1">
    <citation type="journal article" date="2003" name="Proc. Natl. Acad. Sci. U.S.A.">
        <title>The complete genome sequence of Mycobacterium bovis.</title>
        <authorList>
            <person name="Garnier T."/>
            <person name="Eiglmeier K."/>
            <person name="Camus J.-C."/>
            <person name="Medina N."/>
            <person name="Mansoor H."/>
            <person name="Pryor M."/>
            <person name="Duthoy S."/>
            <person name="Grondin S."/>
            <person name="Lacroix C."/>
            <person name="Monsempe C."/>
            <person name="Simon S."/>
            <person name="Harris B."/>
            <person name="Atkin R."/>
            <person name="Doggett J."/>
            <person name="Mayes R."/>
            <person name="Keating L."/>
            <person name="Wheeler P.R."/>
            <person name="Parkhill J."/>
            <person name="Barrell B.G."/>
            <person name="Cole S.T."/>
            <person name="Gordon S.V."/>
            <person name="Hewinson R.G."/>
        </authorList>
    </citation>
    <scope>NUCLEOTIDE SEQUENCE [LARGE SCALE GENOMIC DNA]</scope>
    <source>
        <strain>ATCC BAA-935 / AF2122/97</strain>
    </source>
</reference>
<reference key="2">
    <citation type="journal article" date="2017" name="Genome Announc.">
        <title>Updated reference genome sequence and annotation of Mycobacterium bovis AF2122/97.</title>
        <authorList>
            <person name="Malone K.M."/>
            <person name="Farrell D."/>
            <person name="Stuber T.P."/>
            <person name="Schubert O.T."/>
            <person name="Aebersold R."/>
            <person name="Robbe-Austerman S."/>
            <person name="Gordon S.V."/>
        </authorList>
    </citation>
    <scope>NUCLEOTIDE SEQUENCE [LARGE SCALE GENOMIC DNA]</scope>
    <scope>GENOME REANNOTATION</scope>
    <source>
        <strain>ATCC BAA-935 / AF2122/97</strain>
    </source>
</reference>
<feature type="chain" id="PRO_0000305162" description="Phthiotriol/phenolphthiotriol dimycocerosates methyltransferase">
    <location>
        <begin position="1"/>
        <end position="270"/>
    </location>
</feature>
<evidence type="ECO:0000250" key="1"/>
<evidence type="ECO:0000305" key="2"/>
<gene>
    <name type="ordered locus">BQ2027_MB2976</name>
</gene>
<name>PHMT_MYCBO</name>
<keyword id="KW-0444">Lipid biosynthesis</keyword>
<keyword id="KW-0443">Lipid metabolism</keyword>
<keyword id="KW-0489">Methyltransferase</keyword>
<keyword id="KW-1185">Reference proteome</keyword>
<keyword id="KW-0808">Transferase</keyword>
<protein>
    <recommendedName>
        <fullName>Phthiotriol/phenolphthiotriol dimycocerosates methyltransferase</fullName>
        <ecNumber>2.1.1.-</ecNumber>
    </recommendedName>
</protein>
<proteinExistence type="inferred from homology"/>
<organism>
    <name type="scientific">Mycobacterium bovis (strain ATCC BAA-935 / AF2122/97)</name>
    <dbReference type="NCBI Taxonomy" id="233413"/>
    <lineage>
        <taxon>Bacteria</taxon>
        <taxon>Bacillati</taxon>
        <taxon>Actinomycetota</taxon>
        <taxon>Actinomycetes</taxon>
        <taxon>Mycobacteriales</taxon>
        <taxon>Mycobacteriaceae</taxon>
        <taxon>Mycobacterium</taxon>
        <taxon>Mycobacterium tuberculosis complex</taxon>
    </lineage>
</organism>
<comment type="function">
    <text evidence="1">Catalyzes the methylation of the lipid moiety of the intermediate compounds phthiotriol and glycosylated phenolphthiotriol dimycoserosates to form phthiocerol dimycocerosates (DIM A) and glycosylated phenolphthiocerol dimycocerosates (PGL).</text>
</comment>
<comment type="similarity">
    <text evidence="2">Belongs to the methyltransferase superfamily. Phthiotriol/phenolphthiotriol dimycocerosates methyltransferase family.</text>
</comment>
<accession>Q7TXK3</accession>
<accession>A0A1R3Y329</accession>
<accession>X2BMB7</accession>